<evidence type="ECO:0000256" key="1">
    <source>
        <dbReference type="SAM" id="MobiDB-lite"/>
    </source>
</evidence>
<evidence type="ECO:0000269" key="2">
    <source>
    </source>
</evidence>
<evidence type="ECO:0000269" key="3">
    <source>
    </source>
</evidence>
<evidence type="ECO:0000269" key="4">
    <source>
    </source>
</evidence>
<evidence type="ECO:0000269" key="5">
    <source>
    </source>
</evidence>
<evidence type="ECO:0000269" key="6">
    <source>
    </source>
</evidence>
<evidence type="ECO:0000303" key="7">
    <source>
    </source>
</evidence>
<evidence type="ECO:0000303" key="8">
    <source>
    </source>
</evidence>
<evidence type="ECO:0000305" key="9"/>
<evidence type="ECO:0000305" key="10">
    <source>
    </source>
</evidence>
<evidence type="ECO:0000312" key="11">
    <source>
        <dbReference type="Araport" id="AT3G10650"/>
    </source>
</evidence>
<evidence type="ECO:0000312" key="12">
    <source>
        <dbReference type="EMBL" id="AAF76371.1"/>
    </source>
</evidence>
<evidence type="ECO:0000312" key="13">
    <source>
        <dbReference type="EMBL" id="AAG51374.1"/>
    </source>
</evidence>
<evidence type="ECO:0000312" key="14">
    <source>
        <dbReference type="Proteomes" id="UP000006548"/>
    </source>
</evidence>
<reference key="1">
    <citation type="journal article" date="2000" name="Nature">
        <title>Sequence and analysis of chromosome 3 of the plant Arabidopsis thaliana.</title>
        <authorList>
            <person name="Salanoubat M."/>
            <person name="Lemcke K."/>
            <person name="Rieger M."/>
            <person name="Ansorge W."/>
            <person name="Unseld M."/>
            <person name="Fartmann B."/>
            <person name="Valle G."/>
            <person name="Bloecker H."/>
            <person name="Perez-Alonso M."/>
            <person name="Obermaier B."/>
            <person name="Delseny M."/>
            <person name="Boutry M."/>
            <person name="Grivell L.A."/>
            <person name="Mache R."/>
            <person name="Puigdomenech P."/>
            <person name="De Simone V."/>
            <person name="Choisne N."/>
            <person name="Artiguenave F."/>
            <person name="Robert C."/>
            <person name="Brottier P."/>
            <person name="Wincker P."/>
            <person name="Cattolico L."/>
            <person name="Weissenbach J."/>
            <person name="Saurin W."/>
            <person name="Quetier F."/>
            <person name="Schaefer M."/>
            <person name="Mueller-Auer S."/>
            <person name="Gabel C."/>
            <person name="Fuchs M."/>
            <person name="Benes V."/>
            <person name="Wurmbach E."/>
            <person name="Drzonek H."/>
            <person name="Erfle H."/>
            <person name="Jordan N."/>
            <person name="Bangert S."/>
            <person name="Wiedelmann R."/>
            <person name="Kranz H."/>
            <person name="Voss H."/>
            <person name="Holland R."/>
            <person name="Brandt P."/>
            <person name="Nyakatura G."/>
            <person name="Vezzi A."/>
            <person name="D'Angelo M."/>
            <person name="Pallavicini A."/>
            <person name="Toppo S."/>
            <person name="Simionati B."/>
            <person name="Conrad A."/>
            <person name="Hornischer K."/>
            <person name="Kauer G."/>
            <person name="Loehnert T.-H."/>
            <person name="Nordsiek G."/>
            <person name="Reichelt J."/>
            <person name="Scharfe M."/>
            <person name="Schoen O."/>
            <person name="Bargues M."/>
            <person name="Terol J."/>
            <person name="Climent J."/>
            <person name="Navarro P."/>
            <person name="Collado C."/>
            <person name="Perez-Perez A."/>
            <person name="Ottenwaelder B."/>
            <person name="Duchemin D."/>
            <person name="Cooke R."/>
            <person name="Laudie M."/>
            <person name="Berger-Llauro C."/>
            <person name="Purnelle B."/>
            <person name="Masuy D."/>
            <person name="de Haan M."/>
            <person name="Maarse A.C."/>
            <person name="Alcaraz J.-P."/>
            <person name="Cottet A."/>
            <person name="Casacuberta E."/>
            <person name="Monfort A."/>
            <person name="Argiriou A."/>
            <person name="Flores M."/>
            <person name="Liguori R."/>
            <person name="Vitale D."/>
            <person name="Mannhaupt G."/>
            <person name="Haase D."/>
            <person name="Schoof H."/>
            <person name="Rudd S."/>
            <person name="Zaccaria P."/>
            <person name="Mewes H.-W."/>
            <person name="Mayer K.F.X."/>
            <person name="Kaul S."/>
            <person name="Town C.D."/>
            <person name="Koo H.L."/>
            <person name="Tallon L.J."/>
            <person name="Jenkins J."/>
            <person name="Rooney T."/>
            <person name="Rizzo M."/>
            <person name="Walts A."/>
            <person name="Utterback T."/>
            <person name="Fujii C.Y."/>
            <person name="Shea T.P."/>
            <person name="Creasy T.H."/>
            <person name="Haas B."/>
            <person name="Maiti R."/>
            <person name="Wu D."/>
            <person name="Peterson J."/>
            <person name="Van Aken S."/>
            <person name="Pai G."/>
            <person name="Militscher J."/>
            <person name="Sellers P."/>
            <person name="Gill J.E."/>
            <person name="Feldblyum T.V."/>
            <person name="Preuss D."/>
            <person name="Lin X."/>
            <person name="Nierman W.C."/>
            <person name="Salzberg S.L."/>
            <person name="White O."/>
            <person name="Venter J.C."/>
            <person name="Fraser C.M."/>
            <person name="Kaneko T."/>
            <person name="Nakamura Y."/>
            <person name="Sato S."/>
            <person name="Kato T."/>
            <person name="Asamizu E."/>
            <person name="Sasamoto S."/>
            <person name="Kimura T."/>
            <person name="Idesawa K."/>
            <person name="Kawashima K."/>
            <person name="Kishida Y."/>
            <person name="Kiyokawa C."/>
            <person name="Kohara M."/>
            <person name="Matsumoto M."/>
            <person name="Matsuno A."/>
            <person name="Muraki A."/>
            <person name="Nakayama S."/>
            <person name="Nakazaki N."/>
            <person name="Shinpo S."/>
            <person name="Takeuchi C."/>
            <person name="Wada T."/>
            <person name="Watanabe A."/>
            <person name="Yamada M."/>
            <person name="Yasuda M."/>
            <person name="Tabata S."/>
        </authorList>
    </citation>
    <scope>NUCLEOTIDE SEQUENCE [LARGE SCALE GENOMIC DNA]</scope>
    <source>
        <strain>cv. Columbia</strain>
    </source>
</reference>
<reference key="2">
    <citation type="journal article" date="2017" name="Plant J.">
        <title>Araport11: a complete reannotation of the Arabidopsis thaliana reference genome.</title>
        <authorList>
            <person name="Cheng C.Y."/>
            <person name="Krishnakumar V."/>
            <person name="Chan A.P."/>
            <person name="Thibaud-Nissen F."/>
            <person name="Schobel S."/>
            <person name="Town C.D."/>
        </authorList>
    </citation>
    <scope>GENOME REANNOTATION</scope>
    <source>
        <strain>cv. Columbia</strain>
    </source>
</reference>
<reference key="3">
    <citation type="journal article" date="2003" name="Science">
        <title>Empirical analysis of transcriptional activity in the Arabidopsis genome.</title>
        <authorList>
            <person name="Yamada K."/>
            <person name="Lim J."/>
            <person name="Dale J.M."/>
            <person name="Chen H."/>
            <person name="Shinn P."/>
            <person name="Palm C.J."/>
            <person name="Southwick A.M."/>
            <person name="Wu H.C."/>
            <person name="Kim C.J."/>
            <person name="Nguyen M."/>
            <person name="Pham P.K."/>
            <person name="Cheuk R.F."/>
            <person name="Karlin-Newmann G."/>
            <person name="Liu S.X."/>
            <person name="Lam B."/>
            <person name="Sakano H."/>
            <person name="Wu T."/>
            <person name="Yu G."/>
            <person name="Miranda M."/>
            <person name="Quach H.L."/>
            <person name="Tripp M."/>
            <person name="Chang C.H."/>
            <person name="Lee J.M."/>
            <person name="Toriumi M.J."/>
            <person name="Chan M.M."/>
            <person name="Tang C.C."/>
            <person name="Onodera C.S."/>
            <person name="Deng J.M."/>
            <person name="Akiyama K."/>
            <person name="Ansari Y."/>
            <person name="Arakawa T."/>
            <person name="Banh J."/>
            <person name="Banno F."/>
            <person name="Bowser L."/>
            <person name="Brooks S.Y."/>
            <person name="Carninci P."/>
            <person name="Chao Q."/>
            <person name="Choy N."/>
            <person name="Enju A."/>
            <person name="Goldsmith A.D."/>
            <person name="Gurjal M."/>
            <person name="Hansen N.F."/>
            <person name="Hayashizaki Y."/>
            <person name="Johnson-Hopson C."/>
            <person name="Hsuan V.W."/>
            <person name="Iida K."/>
            <person name="Karnes M."/>
            <person name="Khan S."/>
            <person name="Koesema E."/>
            <person name="Ishida J."/>
            <person name="Jiang P.X."/>
            <person name="Jones T."/>
            <person name="Kawai J."/>
            <person name="Kamiya A."/>
            <person name="Meyers C."/>
            <person name="Nakajima M."/>
            <person name="Narusaka M."/>
            <person name="Seki M."/>
            <person name="Sakurai T."/>
            <person name="Satou M."/>
            <person name="Tamse R."/>
            <person name="Vaysberg M."/>
            <person name="Wallender E.K."/>
            <person name="Wong C."/>
            <person name="Yamamura Y."/>
            <person name="Yuan S."/>
            <person name="Shinozaki K."/>
            <person name="Davis R.W."/>
            <person name="Theologis A."/>
            <person name="Ecker J.R."/>
        </authorList>
    </citation>
    <scope>NUCLEOTIDE SEQUENCE [LARGE SCALE MRNA]</scope>
    <source>
        <strain>cv. Columbia</strain>
    </source>
</reference>
<reference key="4">
    <citation type="journal article" date="2010" name="Plant Cell">
        <title>Identification and characterization of nuclear pore complex components in Arabidopsis thaliana.</title>
        <authorList>
            <person name="Tamura K."/>
            <person name="Fukao Y."/>
            <person name="Iwamoto M."/>
            <person name="Haraguchi T."/>
            <person name="Hara-Nishimura I."/>
        </authorList>
    </citation>
    <scope>IDENTIFICATION IN THE NUCLEAR PORE COMPLEX BY MASS SPECTROMETRY</scope>
    <scope>SUBCELLULAR LOCATION</scope>
    <scope>FUNCTION</scope>
    <scope>DISRUPTION PHENOTYPE</scope>
    <scope>NOMENCLATURE</scope>
    <source>
        <strain>cv. Columbia</strain>
    </source>
</reference>
<reference key="5">
    <citation type="journal article" date="2010" name="Plant J.">
        <title>Arabidopsis homolog of the yeast TREX-2 mRNA export complex: components and anchoring nucleoporin.</title>
        <authorList>
            <person name="Lu Q."/>
            <person name="Tang X."/>
            <person name="Tian G."/>
            <person name="Wang F."/>
            <person name="Liu K."/>
            <person name="Nguyen V."/>
            <person name="Kohalmi S.E."/>
            <person name="Keller W.A."/>
            <person name="Tsang E.W."/>
            <person name="Harada J.J."/>
            <person name="Rothstein S.J."/>
            <person name="Cui Y."/>
        </authorList>
    </citation>
    <scope>FUNCTION</scope>
    <scope>INTERACTION WITH EER5</scope>
    <scope>SUBCELLULAR LOCATION</scope>
    <scope>DISRUPTION PHENOTYPE</scope>
</reference>
<reference key="6">
    <citation type="journal article" date="2011" name="Nucleus">
        <title>Involvement of the nuclear pore complex in morphology of the plant nucleus.</title>
        <authorList>
            <person name="Tamura K."/>
            <person name="Hara-Nishimura I."/>
        </authorList>
    </citation>
    <scope>FUNCTION</scope>
</reference>
<reference key="7">
    <citation type="journal article" date="2012" name="Plant Signal. Behav.">
        <title>Evidence that the Arabidopsis Ubiquitin C-terminal Hydrolases 1 and 2 associate with the 26S proteasome and the TREX-2 complex.</title>
        <authorList>
            <person name="Tian G."/>
            <person name="Lu Q."/>
            <person name="Kohalmi S.E."/>
            <person name="Rothstein S.J."/>
            <person name="Cui Y."/>
        </authorList>
    </citation>
    <scope>INTERACTION WITH UCH1 AND UCH2</scope>
</reference>
<reference key="8">
    <citation type="journal article" date="2014" name="Science">
        <title>Plant development. Arabidopsis NAC45/86 direct sieve element morphogenesis culminating in enucleation.</title>
        <authorList>
            <person name="Furuta K.M."/>
            <person name="Yadav S.R."/>
            <person name="Lehesranta S."/>
            <person name="Belevich I."/>
            <person name="Miyashima S."/>
            <person name="Heo J.O."/>
            <person name="Vaten A."/>
            <person name="Lindgren O."/>
            <person name="De Rybel B."/>
            <person name="Van Isterdael G."/>
            <person name="Somervuo P."/>
            <person name="Lichtenberger R."/>
            <person name="Rocha R."/>
            <person name="Thitamadee S."/>
            <person name="Taehtiharju S."/>
            <person name="Auvinen P."/>
            <person name="Beeckman T."/>
            <person name="Jokitalo E."/>
            <person name="Helariutta Y."/>
        </authorList>
    </citation>
    <scope>SUBCELLULAR LOCATION</scope>
</reference>
<gene>
    <name evidence="7" type="primary">NUP1</name>
    <name evidence="8" type="synonym">NUP136</name>
    <name evidence="11" type="ordered locus">At3g10650</name>
    <name evidence="13" type="ORF">F13M14.6</name>
    <name evidence="12" type="ORF">F18K10.27</name>
</gene>
<organism evidence="14">
    <name type="scientific">Arabidopsis thaliana</name>
    <name type="common">Mouse-ear cress</name>
    <dbReference type="NCBI Taxonomy" id="3702"/>
    <lineage>
        <taxon>Eukaryota</taxon>
        <taxon>Viridiplantae</taxon>
        <taxon>Streptophyta</taxon>
        <taxon>Embryophyta</taxon>
        <taxon>Tracheophyta</taxon>
        <taxon>Spermatophyta</taxon>
        <taxon>Magnoliopsida</taxon>
        <taxon>eudicotyledons</taxon>
        <taxon>Gunneridae</taxon>
        <taxon>Pentapetalae</taxon>
        <taxon>rosids</taxon>
        <taxon>malvids</taxon>
        <taxon>Brassicales</taxon>
        <taxon>Brassicaceae</taxon>
        <taxon>Camelineae</taxon>
        <taxon>Arabidopsis</taxon>
    </lineage>
</organism>
<proteinExistence type="evidence at protein level"/>
<feature type="chain" id="PRO_0000431091" description="Nuclear pore complex protein NUP1">
    <location>
        <begin position="1"/>
        <end position="1309"/>
    </location>
</feature>
<feature type="repeat" description="1">
    <location>
        <begin position="711"/>
        <end position="712"/>
    </location>
</feature>
<feature type="repeat" description="2">
    <location>
        <begin position="804"/>
        <end position="805"/>
    </location>
</feature>
<feature type="repeat" description="3">
    <location>
        <begin position="831"/>
        <end position="832"/>
    </location>
</feature>
<feature type="repeat" description="4">
    <location>
        <begin position="861"/>
        <end position="862"/>
    </location>
</feature>
<feature type="repeat" description="5">
    <location>
        <begin position="869"/>
        <end position="870"/>
    </location>
</feature>
<feature type="repeat" description="6">
    <location>
        <begin position="883"/>
        <end position="884"/>
    </location>
</feature>
<feature type="repeat" description="7">
    <location>
        <begin position="898"/>
        <end position="899"/>
    </location>
</feature>
<feature type="repeat" description="8">
    <location>
        <begin position="927"/>
        <end position="928"/>
    </location>
</feature>
<feature type="repeat" description="9">
    <location>
        <begin position="956"/>
        <end position="957"/>
    </location>
</feature>
<feature type="repeat" description="10">
    <location>
        <begin position="983"/>
        <end position="984"/>
    </location>
</feature>
<feature type="repeat" description="11">
    <location>
        <begin position="1004"/>
        <end position="1005"/>
    </location>
</feature>
<feature type="repeat" description="12">
    <location>
        <begin position="1029"/>
        <end position="1030"/>
    </location>
</feature>
<feature type="repeat" description="13">
    <location>
        <begin position="1038"/>
        <end position="1039"/>
    </location>
</feature>
<feature type="repeat" description="14">
    <location>
        <begin position="1053"/>
        <end position="1054"/>
    </location>
</feature>
<feature type="repeat" description="15">
    <location>
        <begin position="1089"/>
        <end position="1090"/>
    </location>
</feature>
<feature type="repeat" description="16">
    <location>
        <begin position="1121"/>
        <end position="1122"/>
    </location>
</feature>
<feature type="repeat" description="17">
    <location>
        <begin position="1137"/>
        <end position="1138"/>
    </location>
</feature>
<feature type="repeat" description="18">
    <location>
        <begin position="1151"/>
        <end position="1152"/>
    </location>
</feature>
<feature type="repeat" description="19">
    <location>
        <begin position="1153"/>
        <end position="1154"/>
    </location>
</feature>
<feature type="repeat" description="20">
    <location>
        <begin position="1166"/>
        <end position="1167"/>
    </location>
</feature>
<feature type="repeat" description="21">
    <location>
        <begin position="1177"/>
        <end position="1178"/>
    </location>
</feature>
<feature type="repeat" description="22">
    <location>
        <begin position="1186"/>
        <end position="1187"/>
    </location>
</feature>
<feature type="repeat" description="23">
    <location>
        <begin position="1224"/>
        <end position="1225"/>
    </location>
</feature>
<feature type="repeat" description="24">
    <location>
        <begin position="1238"/>
        <end position="1239"/>
    </location>
</feature>
<feature type="repeat" description="25">
    <location>
        <begin position="1255"/>
        <end position="1256"/>
    </location>
</feature>
<feature type="region of interest" description="Disordered" evidence="1">
    <location>
        <begin position="1"/>
        <end position="58"/>
    </location>
</feature>
<feature type="region of interest" description="25 X 2 AA repeats of F-G">
    <location>
        <begin position="2"/>
        <end position="677"/>
    </location>
</feature>
<feature type="region of interest" description="Disordered" evidence="1">
    <location>
        <begin position="83"/>
        <end position="118"/>
    </location>
</feature>
<feature type="region of interest" description="Disordered" evidence="1">
    <location>
        <begin position="173"/>
        <end position="210"/>
    </location>
</feature>
<feature type="region of interest" description="Disordered" evidence="1">
    <location>
        <begin position="266"/>
        <end position="296"/>
    </location>
</feature>
<feature type="region of interest" description="Disordered" evidence="1">
    <location>
        <begin position="329"/>
        <end position="348"/>
    </location>
</feature>
<feature type="region of interest" description="Disordered" evidence="1">
    <location>
        <begin position="384"/>
        <end position="417"/>
    </location>
</feature>
<feature type="region of interest" description="Disordered" evidence="1">
    <location>
        <begin position="467"/>
        <end position="538"/>
    </location>
</feature>
<feature type="region of interest" description="Disordered" evidence="1">
    <location>
        <begin position="594"/>
        <end position="617"/>
    </location>
</feature>
<feature type="region of interest" description="Disordered" evidence="1">
    <location>
        <begin position="635"/>
        <end position="680"/>
    </location>
</feature>
<feature type="region of interest" description="Disordered" evidence="1">
    <location>
        <begin position="719"/>
        <end position="865"/>
    </location>
</feature>
<feature type="region of interest" description="Disordered" evidence="1">
    <location>
        <begin position="1004"/>
        <end position="1028"/>
    </location>
</feature>
<feature type="region of interest" description="Disordered" evidence="1">
    <location>
        <begin position="1068"/>
        <end position="1105"/>
    </location>
</feature>
<feature type="region of interest" description="Disordered" evidence="1">
    <location>
        <begin position="1278"/>
        <end position="1309"/>
    </location>
</feature>
<feature type="compositionally biased region" description="Basic residues" evidence="1">
    <location>
        <begin position="22"/>
        <end position="32"/>
    </location>
</feature>
<feature type="compositionally biased region" description="Gly residues" evidence="1">
    <location>
        <begin position="47"/>
        <end position="58"/>
    </location>
</feature>
<feature type="compositionally biased region" description="Polar residues" evidence="1">
    <location>
        <begin position="91"/>
        <end position="101"/>
    </location>
</feature>
<feature type="compositionally biased region" description="Basic and acidic residues" evidence="1">
    <location>
        <begin position="195"/>
        <end position="204"/>
    </location>
</feature>
<feature type="compositionally biased region" description="Polar residues" evidence="1">
    <location>
        <begin position="268"/>
        <end position="283"/>
    </location>
</feature>
<feature type="compositionally biased region" description="Basic and acidic residues" evidence="1">
    <location>
        <begin position="396"/>
        <end position="405"/>
    </location>
</feature>
<feature type="compositionally biased region" description="Polar residues" evidence="1">
    <location>
        <begin position="597"/>
        <end position="617"/>
    </location>
</feature>
<feature type="compositionally biased region" description="Polar residues" evidence="1">
    <location>
        <begin position="635"/>
        <end position="659"/>
    </location>
</feature>
<feature type="compositionally biased region" description="Basic and acidic residues" evidence="1">
    <location>
        <begin position="660"/>
        <end position="673"/>
    </location>
</feature>
<feature type="compositionally biased region" description="Low complexity" evidence="1">
    <location>
        <begin position="728"/>
        <end position="741"/>
    </location>
</feature>
<feature type="compositionally biased region" description="Low complexity" evidence="1">
    <location>
        <begin position="767"/>
        <end position="783"/>
    </location>
</feature>
<feature type="compositionally biased region" description="Polar residues" evidence="1">
    <location>
        <begin position="789"/>
        <end position="803"/>
    </location>
</feature>
<feature type="compositionally biased region" description="Low complexity" evidence="1">
    <location>
        <begin position="809"/>
        <end position="827"/>
    </location>
</feature>
<feature type="compositionally biased region" description="Low complexity" evidence="1">
    <location>
        <begin position="1004"/>
        <end position="1023"/>
    </location>
</feature>
<feature type="compositionally biased region" description="Low complexity" evidence="1">
    <location>
        <begin position="1068"/>
        <end position="1086"/>
    </location>
</feature>
<feature type="compositionally biased region" description="Low complexity" evidence="1">
    <location>
        <begin position="1096"/>
        <end position="1105"/>
    </location>
</feature>
<feature type="compositionally biased region" description="Gly residues" evidence="1">
    <location>
        <begin position="1279"/>
        <end position="1293"/>
    </location>
</feature>
<feature type="compositionally biased region" description="Basic residues" evidence="1">
    <location>
        <begin position="1297"/>
        <end position="1309"/>
    </location>
</feature>
<keyword id="KW-0963">Cytoplasm</keyword>
<keyword id="KW-0509">mRNA transport</keyword>
<keyword id="KW-0906">Nuclear pore complex</keyword>
<keyword id="KW-0539">Nucleus</keyword>
<keyword id="KW-0653">Protein transport</keyword>
<keyword id="KW-1185">Reference proteome</keyword>
<keyword id="KW-0677">Repeat</keyword>
<keyword id="KW-0811">Translocation</keyword>
<keyword id="KW-0813">Transport</keyword>
<name>NUP1_ARATH</name>
<accession>Q9CAF4</accession>
<accession>Q9LPN4</accession>
<sequence>MASAARGESSNPYGGGLGTGGKFRKPTARRSQKTPYDRPTTSVRNAGLGGGDVRGGGWLSKLVDPAQRLITYSAQRLFGSLSRKRLGSGETPLQSPEQQKQLPERGVNQETKVGHKEDVSNLSMKNGLIRMEDTNASVDPPKDGFTDLEKILQGKTFTRSEVDRLTTLLRSKAADSSTMNEEQRNEVGMVVRHPPSHERDRTHPDNGSMNTLVSTPPGSLRTLDECIASPAQLAKAYMGSRPSEVTPSMLGLRGQAGREDSVFLNRTPFPQKSPTMSLVTKPSGQRPLENGFVTPRSRGRSAVYSMARTPYSRPQSSVKIGSLFQASPSKWEESLPSGSRQGFQSGLKRRSSVLDNDIGSVGPVRRIRQKSNLSSRSLALPVSESPLSVRANGGEKTTHTSKDSAEDIPGSSFNLVPTKSSEMASKILQQLDKLVSTREKSPSKLSPSMLRGPALKSLQNVEAPKFLGNLPEKKANSPDSSYQKQEISRESVSREVLAQSEKTGDAVDGTSKTGSSKDQDMRGKGVYMPLTNSLEEHPPKKRSFRMSAHEDFLELDDDLGAASTPCEVAEKQNAFEVEKSHISMPIGEKPLTPSEAMPSTSYISNGDASQGTSNGSLETERNKFVAFPIEAVQQSNMASEPTSKFIQGTEKSSISSGKPTSEEKRIPLEEPKKPAAVFPNISFSPPATGLLNQNSGASADIKLEKTSSTAFGVSEAWAKPTESKKTFSNSASGAESSTSAAPTLNGSIFSAGANAVTPPPSNGSLTSSPSFPPSISNIPSDNSVGDMPSTVQSFAATHNSSSIFGKLPTSNDSNSQSTSASPLSSTSPFKFGQPAAPFSAPAVSESSGQISKETEVKNATFGNTSTFKFGGMASADQSTGIVFGAKSAENKSRPGFVFGSSSVVGGSTLNPSTAAASAPESSGSLIFGVTSSSTPGTETSKISASSAATNTGNSVFGTSSFAFTSSGSSMVGGVSASTGSSVFGFNAVSSASATSSQSQASNLFGAGNAQTGNTGSGTTTSTQSIPFQFGSSPSAPSFGLSGNSSLASNSSPFGFSKSEPAVFTSVSTPQLSSTNSSASSSSTMSSPLFGTSWQAPNSSPNSGPVFSSSFTTSSTPTTFSFGGSSAATVSSTTTPIFGASTNNTPSPSPIFGFGSTPPTTPQQPVFGNSGTPSQSLFGNSTPGFAFGAPNNGNGINNNQQVSMEDSMAEDTDQANRASMVAPMFGQAAVSMPQPNFAFGGGAATQPPSMANPFQFGGQPMASTLQNASPFQASQSLEFQGGGSFSLGSTGGGDKSGRRIFKAKKSTRKK</sequence>
<protein>
    <recommendedName>
        <fullName evidence="7">Nuclear pore complex protein NUP1</fullName>
    </recommendedName>
    <alternativeName>
        <fullName evidence="8">Nuclear pore complex protein NUP136</fullName>
    </alternativeName>
    <alternativeName>
        <fullName evidence="7">Nucleoporin 1</fullName>
    </alternativeName>
    <alternativeName>
        <fullName evidence="8">Nucleoporin 136</fullName>
    </alternativeName>
</protein>
<dbReference type="EMBL" id="AC011560">
    <property type="protein sequence ID" value="AAG51374.1"/>
    <property type="molecule type" value="Genomic_DNA"/>
</dbReference>
<dbReference type="EMBL" id="AC013428">
    <property type="protein sequence ID" value="AAF76371.1"/>
    <property type="status" value="ALT_SEQ"/>
    <property type="molecule type" value="Genomic_DNA"/>
</dbReference>
<dbReference type="EMBL" id="CP002686">
    <property type="protein sequence ID" value="AEE74939.1"/>
    <property type="molecule type" value="Genomic_DNA"/>
</dbReference>
<dbReference type="EMBL" id="CP002686">
    <property type="protein sequence ID" value="ANM65285.1"/>
    <property type="molecule type" value="Genomic_DNA"/>
</dbReference>
<dbReference type="EMBL" id="AY093026">
    <property type="protein sequence ID" value="AAM13025.1"/>
    <property type="molecule type" value="mRNA"/>
</dbReference>
<dbReference type="EMBL" id="BT010595">
    <property type="protein sequence ID" value="AAQ89617.1"/>
    <property type="molecule type" value="mRNA"/>
</dbReference>
<dbReference type="RefSeq" id="NP_001327263.1">
    <property type="nucleotide sequence ID" value="NM_001337888.1"/>
</dbReference>
<dbReference type="RefSeq" id="NP_187676.1">
    <property type="nucleotide sequence ID" value="NM_111901.4"/>
</dbReference>
<dbReference type="SMR" id="Q9CAF4"/>
<dbReference type="BioGRID" id="5568">
    <property type="interactions" value="63"/>
</dbReference>
<dbReference type="FunCoup" id="Q9CAF4">
    <property type="interactions" value="1338"/>
</dbReference>
<dbReference type="IntAct" id="Q9CAF4">
    <property type="interactions" value="1"/>
</dbReference>
<dbReference type="STRING" id="3702.Q9CAF4"/>
<dbReference type="GlyGen" id="Q9CAF4">
    <property type="glycosylation" value="5 sites, 1 O-linked glycan (1 site)"/>
</dbReference>
<dbReference type="iPTMnet" id="Q9CAF4"/>
<dbReference type="PaxDb" id="3702-AT3G10650.1"/>
<dbReference type="ProteomicsDB" id="249353"/>
<dbReference type="EnsemblPlants" id="AT3G10650.1">
    <property type="protein sequence ID" value="AT3G10650.1"/>
    <property type="gene ID" value="AT3G10650"/>
</dbReference>
<dbReference type="EnsemblPlants" id="AT3G10650.2">
    <property type="protein sequence ID" value="AT3G10650.2"/>
    <property type="gene ID" value="AT3G10650"/>
</dbReference>
<dbReference type="GeneID" id="820234"/>
<dbReference type="Gramene" id="AT3G10650.1">
    <property type="protein sequence ID" value="AT3G10650.1"/>
    <property type="gene ID" value="AT3G10650"/>
</dbReference>
<dbReference type="Gramene" id="AT3G10650.2">
    <property type="protein sequence ID" value="AT3G10650.2"/>
    <property type="gene ID" value="AT3G10650"/>
</dbReference>
<dbReference type="KEGG" id="ath:AT3G10650"/>
<dbReference type="Araport" id="AT3G10650"/>
<dbReference type="TAIR" id="AT3G10650">
    <property type="gene designation" value="NUP1"/>
</dbReference>
<dbReference type="eggNOG" id="KOG0845">
    <property type="taxonomic scope" value="Eukaryota"/>
</dbReference>
<dbReference type="HOGENOM" id="CLU_006995_1_0_1"/>
<dbReference type="InParanoid" id="Q9CAF4"/>
<dbReference type="OMA" id="PMFGNSA"/>
<dbReference type="PhylomeDB" id="Q9CAF4"/>
<dbReference type="CD-CODE" id="4299E36E">
    <property type="entry name" value="Nucleolus"/>
</dbReference>
<dbReference type="PRO" id="PR:Q9CAF4"/>
<dbReference type="Proteomes" id="UP000006548">
    <property type="component" value="Chromosome 3"/>
</dbReference>
<dbReference type="ExpressionAtlas" id="Q9CAF4">
    <property type="expression patterns" value="baseline and differential"/>
</dbReference>
<dbReference type="GO" id="GO:0005829">
    <property type="term" value="C:cytosol"/>
    <property type="evidence" value="ECO:0007669"/>
    <property type="project" value="UniProtKB-SubCell"/>
</dbReference>
<dbReference type="GO" id="GO:0005635">
    <property type="term" value="C:nuclear envelope"/>
    <property type="evidence" value="ECO:0000314"/>
    <property type="project" value="TAIR"/>
</dbReference>
<dbReference type="GO" id="GO:0034399">
    <property type="term" value="C:nuclear periphery"/>
    <property type="evidence" value="ECO:0000314"/>
    <property type="project" value="TAIR"/>
</dbReference>
<dbReference type="GO" id="GO:0005643">
    <property type="term" value="C:nuclear pore"/>
    <property type="evidence" value="ECO:0000314"/>
    <property type="project" value="TAIR"/>
</dbReference>
<dbReference type="GO" id="GO:0006997">
    <property type="term" value="P:nucleus organization"/>
    <property type="evidence" value="ECO:0000315"/>
    <property type="project" value="TAIR"/>
</dbReference>
<dbReference type="GO" id="GO:0016973">
    <property type="term" value="P:poly(A)+ mRNA export from nucleus"/>
    <property type="evidence" value="ECO:0000315"/>
    <property type="project" value="TAIR"/>
</dbReference>
<dbReference type="GO" id="GO:0015031">
    <property type="term" value="P:protein transport"/>
    <property type="evidence" value="ECO:0007669"/>
    <property type="project" value="UniProtKB-KW"/>
</dbReference>
<dbReference type="PANTHER" id="PTHR33416">
    <property type="entry name" value="NUCLEAR PORE COMPLEX PROTEIN NUP1"/>
    <property type="match status" value="1"/>
</dbReference>
<dbReference type="PANTHER" id="PTHR33416:SF20">
    <property type="entry name" value="NUCLEAR PORE COMPLEX PROTEIN NUP1"/>
    <property type="match status" value="1"/>
</dbReference>
<comment type="function">
    <text evidence="2 4 10">Nucleoporin required for nuclear mRNA export. Functions as an adapter and/or regulator molecule in the periphery of the nuclear pore complex (NPC). May interact with importin proteins and mediate active nucleocytoplasmic transport through the NPC. Involved in regulation of nuclear morphology.</text>
</comment>
<comment type="subunit">
    <text evidence="2 5 10">Part of the nuclear pore complex (NPC). The NPC has an eight-fold symmetrical structure comprising a central transport channel and two rings, the cytoplasmic and nuclear rings, to which eight filaments are attached. The cytoplasmic filaments have loose ends, while the nuclear filaments are joined in a distal ring, forming a nuclear basket. NPCs are highly dynamic in configuration and composition, and can be devided in 3 subcomplexes, the NUP62 subcomplex, the NUP107-160 subcomplex and the NUP93 subcomplex, containing approximately 30 different nucleoporin proteins. Interacts with EER5, anchoring the TREX-2 complex on the nuclear pore complex (PubMed:19843313). Interacts with UCH1 and UCH2 (PubMed:22951400).</text>
</comment>
<comment type="interaction">
    <interactant intactId="EBI-2619711">
        <id>Q9CAF4</id>
    </interactant>
    <interactant intactId="EBI-2619706">
        <id>Q8GWE6</id>
        <label>EER5</label>
    </interactant>
    <organismsDiffer>false</organismsDiffer>
    <experiments>3</experiments>
</comment>
<comment type="subcellular location">
    <subcellularLocation>
        <location evidence="2 3 6">Nucleus envelope</location>
    </subcellularLocation>
    <subcellularLocation>
        <location evidence="3">Nucleus</location>
        <location evidence="3">Nuclear pore complex</location>
    </subcellularLocation>
    <subcellularLocation>
        <location evidence="3">Cytoplasm</location>
        <location evidence="3">Cytosol</location>
    </subcellularLocation>
    <text evidence="3">Interacts dynamically with the NPC and localizes to the cytosolic pool following nuclear envelope breakdown during mitosis.</text>
</comment>
<comment type="domain">
    <text evidence="9">Contains FG repeats mediating the translocation through the NPC by interacting with transport factors.</text>
</comment>
<comment type="disruption phenotype">
    <text evidence="2 3">Developmental defects, early flowering and altered nuclear morphology. Lethal when homozygous.</text>
</comment>
<comment type="miscellaneous">
    <text evidence="10">Represents a functional homolog of vertebrate Nup153.</text>
</comment>
<comment type="sequence caution" evidence="9">
    <conflict type="erroneous gene model prediction">
        <sequence resource="EMBL-CDS" id="AAF76371"/>
    </conflict>
</comment>